<comment type="function">
    <text evidence="1 4">Has antiparasitic activity against trypomastigote form of T.cruzi (IC(50)=0.68 uM) in vitro but not against L.infantum (PubMed:24113627). Probably acts by permeabilizing cell membranes (PubMed:24113627). In vitro, shows no cytotoxicity against macrophages (PubMed:24113627). Has antibacterial activity (By similarity).</text>
</comment>
<comment type="subcellular location">
    <subcellularLocation>
        <location evidence="2 4">Secreted</location>
    </subcellularLocation>
</comment>
<comment type="tissue specificity">
    <text evidence="8">Expressed by the skin glands.</text>
</comment>
<comment type="mass spectrometry"/>
<comment type="similarity">
    <text evidence="7">Belongs to the frog skin active peptide (FSAP) family. Dermaseptin subfamily.</text>
</comment>
<protein>
    <recommendedName>
        <fullName evidence="6">Dermaseptin-1</fullName>
    </recommendedName>
</protein>
<name>DMS1_PITNO</name>
<keyword id="KW-0027">Amidation</keyword>
<keyword id="KW-0878">Amphibian defense peptide</keyword>
<keyword id="KW-0044">Antibiotic</keyword>
<keyword id="KW-0929">Antimicrobial</keyword>
<keyword id="KW-0165">Cleavage on pair of basic residues</keyword>
<keyword id="KW-0903">Direct protein sequencing</keyword>
<keyword id="KW-0964">Secreted</keyword>
<keyword id="KW-0732">Signal</keyword>
<accession>J7H8J4</accession>
<feature type="signal peptide" evidence="2">
    <location>
        <begin position="1"/>
        <end position="22"/>
    </location>
</feature>
<feature type="propeptide" id="PRO_0000441004" description="Removed in mature form" evidence="9">
    <location>
        <begin position="23"/>
        <end position="43"/>
    </location>
</feature>
<feature type="peptide" id="PRO_0000441005" description="Dermaseptin-1" evidence="4">
    <location>
        <begin position="46"/>
        <end position="70"/>
    </location>
</feature>
<feature type="propeptide" id="PRO_0000441006" description="Removed in mature form" evidence="9">
    <location>
        <begin position="72"/>
        <end position="73"/>
    </location>
</feature>
<feature type="region of interest" description="Disordered" evidence="3">
    <location>
        <begin position="25"/>
        <end position="46"/>
    </location>
</feature>
<feature type="compositionally biased region" description="Acidic residues" evidence="3">
    <location>
        <begin position="30"/>
        <end position="40"/>
    </location>
</feature>
<feature type="modified residue" description="Leucine amide" evidence="4">
    <location>
        <position position="70"/>
    </location>
</feature>
<evidence type="ECO:0000250" key="1">
    <source>
        <dbReference type="UniProtKB" id="Q1EJP5"/>
    </source>
</evidence>
<evidence type="ECO:0000255" key="2"/>
<evidence type="ECO:0000256" key="3">
    <source>
        <dbReference type="SAM" id="MobiDB-lite"/>
    </source>
</evidence>
<evidence type="ECO:0000269" key="4">
    <source>
    </source>
</evidence>
<evidence type="ECO:0000303" key="5">
    <source>
    </source>
</evidence>
<evidence type="ECO:0000303" key="6">
    <source>
    </source>
</evidence>
<evidence type="ECO:0000305" key="7"/>
<evidence type="ECO:0000305" key="8">
    <source>
    </source>
</evidence>
<evidence type="ECO:0000305" key="9">
    <source>
    </source>
</evidence>
<evidence type="ECO:0000312" key="10">
    <source>
        <dbReference type="EMBL" id="AFP89761.1"/>
    </source>
</evidence>
<organism evidence="10">
    <name type="scientific">Pithecopus nordestinus</name>
    <name type="common">Northeastern Brazilian leaf frog</name>
    <name type="synonym">Phyllomedusa nordestina</name>
    <dbReference type="NCBI Taxonomy" id="2034992"/>
    <lineage>
        <taxon>Eukaryota</taxon>
        <taxon>Metazoa</taxon>
        <taxon>Chordata</taxon>
        <taxon>Craniata</taxon>
        <taxon>Vertebrata</taxon>
        <taxon>Euteleostomi</taxon>
        <taxon>Amphibia</taxon>
        <taxon>Batrachia</taxon>
        <taxon>Anura</taxon>
        <taxon>Neobatrachia</taxon>
        <taxon>Hyloidea</taxon>
        <taxon>Hylidae</taxon>
        <taxon>Phyllomedusinae</taxon>
        <taxon>Pithecopus</taxon>
    </lineage>
</organism>
<sequence>MAFLKKSIFLALFLGMVSLSICEEEKRENEGEEEQEDDEQSEMKRGLWSTIKNVGKEAAIAAGKAALGALGEQ</sequence>
<reference evidence="10" key="1">
    <citation type="journal article" date="2013" name="Toxicon">
        <title>Gene expression analysis by ESTs sequencing of the Brazilian frog Phyllomedusa nordestina skin glands.</title>
        <authorList>
            <person name="Neiva M."/>
            <person name="Vargas D.C."/>
            <person name="Conceicao K."/>
            <person name="Radis-Baptista G."/>
            <person name="Assakura M.T."/>
            <person name="Jared C."/>
            <person name="Hayashi M.A."/>
        </authorList>
    </citation>
    <scope>NUCLEOTIDE SEQUENCE [MRNA]</scope>
    <source>
        <tissue evidence="5">Skin</tissue>
    </source>
</reference>
<reference evidence="7" key="2">
    <citation type="journal article" date="2013" name="Exp. Parasitol.">
        <title>Antimicrobial peptides isolated from Phyllomedusa nordestina (Amphibia) alter the permeability of plasma membrane of Leishmania and Trypanosoma cruzi.</title>
        <authorList>
            <person name="Pinto E.G."/>
            <person name="Pimenta D.C."/>
            <person name="Antoniazzi M.M."/>
            <person name="Jared C."/>
            <person name="Tempone A.G."/>
        </authorList>
    </citation>
    <scope>PROTEIN SEQUENCE OF 46-70</scope>
    <scope>FUNCTION</scope>
    <scope>SUBCELLULAR LOCATION</scope>
    <scope>MASS SPECTROMETRY</scope>
    <scope>AMIDATION AT LEU-70</scope>
    <source>
        <tissue evidence="6">Skin secretion</tissue>
    </source>
</reference>
<dbReference type="EMBL" id="JX127159">
    <property type="protein sequence ID" value="AFP89761.1"/>
    <property type="molecule type" value="mRNA"/>
</dbReference>
<dbReference type="GO" id="GO:0005576">
    <property type="term" value="C:extracellular region"/>
    <property type="evidence" value="ECO:0007669"/>
    <property type="project" value="UniProtKB-SubCell"/>
</dbReference>
<dbReference type="GO" id="GO:0042742">
    <property type="term" value="P:defense response to bacterium"/>
    <property type="evidence" value="ECO:0007669"/>
    <property type="project" value="UniProtKB-KW"/>
</dbReference>
<dbReference type="InterPro" id="IPR022731">
    <property type="entry name" value="Dermaseptin_dom"/>
</dbReference>
<dbReference type="InterPro" id="IPR004275">
    <property type="entry name" value="Frog_antimicrobial_propeptide"/>
</dbReference>
<dbReference type="InterPro" id="IPR016322">
    <property type="entry name" value="FSAP"/>
</dbReference>
<dbReference type="Pfam" id="PF12121">
    <property type="entry name" value="DD_K"/>
    <property type="match status" value="1"/>
</dbReference>
<dbReference type="Pfam" id="PF03032">
    <property type="entry name" value="FSAP_sig_propep"/>
    <property type="match status" value="1"/>
</dbReference>
<dbReference type="PIRSF" id="PIRSF001822">
    <property type="entry name" value="Dermaseptin_precursor"/>
    <property type="match status" value="1"/>
</dbReference>
<proteinExistence type="evidence at protein level"/>